<feature type="chain" id="PRO_0000167711" description="Pyridoxine/pyridoxamine 5'-phosphate oxidase">
    <location>
        <begin position="1"/>
        <end position="210"/>
    </location>
</feature>
<feature type="binding site" evidence="1">
    <location>
        <begin position="7"/>
        <end position="10"/>
    </location>
    <ligand>
        <name>substrate</name>
    </ligand>
</feature>
<feature type="binding site" evidence="1">
    <location>
        <begin position="60"/>
        <end position="65"/>
    </location>
    <ligand>
        <name>FMN</name>
        <dbReference type="ChEBI" id="CHEBI:58210"/>
    </ligand>
</feature>
<feature type="binding site" evidence="1">
    <location>
        <position position="65"/>
    </location>
    <ligand>
        <name>substrate</name>
    </ligand>
</feature>
<feature type="binding site" evidence="1">
    <location>
        <begin position="75"/>
        <end position="76"/>
    </location>
    <ligand>
        <name>FMN</name>
        <dbReference type="ChEBI" id="CHEBI:58210"/>
    </ligand>
</feature>
<feature type="binding site" evidence="1">
    <location>
        <position position="81"/>
    </location>
    <ligand>
        <name>FMN</name>
        <dbReference type="ChEBI" id="CHEBI:58210"/>
    </ligand>
</feature>
<feature type="binding site" evidence="1">
    <location>
        <position position="82"/>
    </location>
    <ligand>
        <name>FMN</name>
        <dbReference type="ChEBI" id="CHEBI:58210"/>
    </ligand>
</feature>
<feature type="binding site" evidence="1">
    <location>
        <position position="104"/>
    </location>
    <ligand>
        <name>FMN</name>
        <dbReference type="ChEBI" id="CHEBI:58210"/>
    </ligand>
</feature>
<feature type="binding site" evidence="1">
    <location>
        <position position="122"/>
    </location>
    <ligand>
        <name>substrate</name>
    </ligand>
</feature>
<feature type="binding site" evidence="1">
    <location>
        <position position="126"/>
    </location>
    <ligand>
        <name>substrate</name>
    </ligand>
</feature>
<feature type="binding site" evidence="1">
    <location>
        <position position="130"/>
    </location>
    <ligand>
        <name>substrate</name>
    </ligand>
</feature>
<feature type="binding site" evidence="1">
    <location>
        <begin position="139"/>
        <end position="140"/>
    </location>
    <ligand>
        <name>FMN</name>
        <dbReference type="ChEBI" id="CHEBI:58210"/>
    </ligand>
</feature>
<feature type="binding site" evidence="1">
    <location>
        <position position="183"/>
    </location>
    <ligand>
        <name>FMN</name>
        <dbReference type="ChEBI" id="CHEBI:58210"/>
    </ligand>
</feature>
<feature type="binding site" evidence="1">
    <location>
        <begin position="189"/>
        <end position="191"/>
    </location>
    <ligand>
        <name>substrate</name>
    </ligand>
</feature>
<feature type="binding site" evidence="1">
    <location>
        <position position="193"/>
    </location>
    <ligand>
        <name>FMN</name>
        <dbReference type="ChEBI" id="CHEBI:58210"/>
    </ligand>
</feature>
<evidence type="ECO:0000255" key="1">
    <source>
        <dbReference type="HAMAP-Rule" id="MF_01629"/>
    </source>
</evidence>
<evidence type="ECO:0000305" key="2"/>
<protein>
    <recommendedName>
        <fullName evidence="1">Pyridoxine/pyridoxamine 5'-phosphate oxidase</fullName>
        <ecNumber evidence="1">1.4.3.5</ecNumber>
    </recommendedName>
    <alternativeName>
        <fullName evidence="1">PNP/PMP oxidase</fullName>
        <shortName evidence="1">PNPOx</shortName>
    </alternativeName>
    <alternativeName>
        <fullName evidence="1">Pyridoxal 5'-phosphate synthase</fullName>
    </alternativeName>
</protein>
<accession>P44909</accession>
<keyword id="KW-0285">Flavoprotein</keyword>
<keyword id="KW-0288">FMN</keyword>
<keyword id="KW-0560">Oxidoreductase</keyword>
<keyword id="KW-0664">Pyridoxine biosynthesis</keyword>
<keyword id="KW-1185">Reference proteome</keyword>
<organism>
    <name type="scientific">Haemophilus influenzae (strain ATCC 51907 / DSM 11121 / KW20 / Rd)</name>
    <dbReference type="NCBI Taxonomy" id="71421"/>
    <lineage>
        <taxon>Bacteria</taxon>
        <taxon>Pseudomonadati</taxon>
        <taxon>Pseudomonadota</taxon>
        <taxon>Gammaproteobacteria</taxon>
        <taxon>Pasteurellales</taxon>
        <taxon>Pasteurellaceae</taxon>
        <taxon>Haemophilus</taxon>
    </lineage>
</organism>
<proteinExistence type="inferred from homology"/>
<sequence length="210" mass="24500">MELHNIRDEYTKRVLSQHDCHENPISQFEQWQKEAIHAQVNEPTAMNIATVDEQGRPNSRMVLLKEVNEQGFVFFTNYLSRKGGCIEHNPYVALTFFWPELERQVRIEGKAVKIPAEQSDKYFATRPYTSRIGAWASEQSAVISNYKSLLAKAALVAAKHPLNVPRPDYWGGYLVVPETVEFWQGRPSRLHDRIRYRKESDNWIRERLSP</sequence>
<reference key="1">
    <citation type="journal article" date="1995" name="Science">
        <title>Whole-genome random sequencing and assembly of Haemophilus influenzae Rd.</title>
        <authorList>
            <person name="Fleischmann R.D."/>
            <person name="Adams M.D."/>
            <person name="White O."/>
            <person name="Clayton R.A."/>
            <person name="Kirkness E.F."/>
            <person name="Kerlavage A.R."/>
            <person name="Bult C.J."/>
            <person name="Tomb J.-F."/>
            <person name="Dougherty B.A."/>
            <person name="Merrick J.M."/>
            <person name="McKenney K."/>
            <person name="Sutton G.G."/>
            <person name="FitzHugh W."/>
            <person name="Fields C.A."/>
            <person name="Gocayne J.D."/>
            <person name="Scott J.D."/>
            <person name="Shirley R."/>
            <person name="Liu L.-I."/>
            <person name="Glodek A."/>
            <person name="Kelley J.M."/>
            <person name="Weidman J.F."/>
            <person name="Phillips C.A."/>
            <person name="Spriggs T."/>
            <person name="Hedblom E."/>
            <person name="Cotton M.D."/>
            <person name="Utterback T.R."/>
            <person name="Hanna M.C."/>
            <person name="Nguyen D.T."/>
            <person name="Saudek D.M."/>
            <person name="Brandon R.C."/>
            <person name="Fine L.D."/>
            <person name="Fritchman J.L."/>
            <person name="Fuhrmann J.L."/>
            <person name="Geoghagen N.S.M."/>
            <person name="Gnehm C.L."/>
            <person name="McDonald L.A."/>
            <person name="Small K.V."/>
            <person name="Fraser C.M."/>
            <person name="Smith H.O."/>
            <person name="Venter J.C."/>
        </authorList>
    </citation>
    <scope>NUCLEOTIDE SEQUENCE [LARGE SCALE GENOMIC DNA]</scope>
    <source>
        <strain>ATCC 51907 / DSM 11121 / KW20 / Rd</strain>
    </source>
</reference>
<dbReference type="EC" id="1.4.3.5" evidence="1"/>
<dbReference type="EMBL" id="L42023">
    <property type="protein sequence ID" value="AAC22522.1"/>
    <property type="status" value="ALT_INIT"/>
    <property type="molecule type" value="Genomic_DNA"/>
</dbReference>
<dbReference type="PIR" id="H64098">
    <property type="entry name" value="H64098"/>
</dbReference>
<dbReference type="RefSeq" id="NP_439023.2">
    <property type="nucleotide sequence ID" value="NC_000907.1"/>
</dbReference>
<dbReference type="SMR" id="P44909"/>
<dbReference type="STRING" id="71421.HI_0863"/>
<dbReference type="EnsemblBacteria" id="AAC22522">
    <property type="protein sequence ID" value="AAC22522"/>
    <property type="gene ID" value="HI_0863"/>
</dbReference>
<dbReference type="KEGG" id="hin:HI_0863"/>
<dbReference type="PATRIC" id="fig|71421.8.peg.904"/>
<dbReference type="eggNOG" id="COG0259">
    <property type="taxonomic scope" value="Bacteria"/>
</dbReference>
<dbReference type="HOGENOM" id="CLU_032263_2_2_6"/>
<dbReference type="OrthoDB" id="9780392at2"/>
<dbReference type="PhylomeDB" id="P44909"/>
<dbReference type="BioCyc" id="HINF71421:G1GJ1-904-MONOMER"/>
<dbReference type="UniPathway" id="UPA01068">
    <property type="reaction ID" value="UER00304"/>
</dbReference>
<dbReference type="UniPathway" id="UPA01068">
    <property type="reaction ID" value="UER00305"/>
</dbReference>
<dbReference type="Proteomes" id="UP000000579">
    <property type="component" value="Chromosome"/>
</dbReference>
<dbReference type="GO" id="GO:0010181">
    <property type="term" value="F:FMN binding"/>
    <property type="evidence" value="ECO:0007669"/>
    <property type="project" value="UniProtKB-UniRule"/>
</dbReference>
<dbReference type="GO" id="GO:0004733">
    <property type="term" value="F:pyridoxamine phosphate oxidase activity"/>
    <property type="evidence" value="ECO:0000318"/>
    <property type="project" value="GO_Central"/>
</dbReference>
<dbReference type="GO" id="GO:0042823">
    <property type="term" value="P:pyridoxal phosphate biosynthetic process"/>
    <property type="evidence" value="ECO:0000318"/>
    <property type="project" value="GO_Central"/>
</dbReference>
<dbReference type="GO" id="GO:0008615">
    <property type="term" value="P:pyridoxine biosynthetic process"/>
    <property type="evidence" value="ECO:0007669"/>
    <property type="project" value="UniProtKB-KW"/>
</dbReference>
<dbReference type="FunFam" id="2.30.110.10:FF:000014">
    <property type="entry name" value="Pyridoxine/pyridoxamine 5'-phosphate oxidase"/>
    <property type="match status" value="1"/>
</dbReference>
<dbReference type="Gene3D" id="2.30.110.10">
    <property type="entry name" value="Electron Transport, Fmn-binding Protein, Chain A"/>
    <property type="match status" value="1"/>
</dbReference>
<dbReference type="HAMAP" id="MF_01629">
    <property type="entry name" value="PdxH"/>
    <property type="match status" value="1"/>
</dbReference>
<dbReference type="InterPro" id="IPR000659">
    <property type="entry name" value="Pyridox_Oxase"/>
</dbReference>
<dbReference type="InterPro" id="IPR019740">
    <property type="entry name" value="Pyridox_Oxase_CS"/>
</dbReference>
<dbReference type="InterPro" id="IPR011576">
    <property type="entry name" value="Pyridox_Oxase_N"/>
</dbReference>
<dbReference type="InterPro" id="IPR019576">
    <property type="entry name" value="Pyridoxamine_oxidase_dimer_C"/>
</dbReference>
<dbReference type="InterPro" id="IPR012349">
    <property type="entry name" value="Split_barrel_FMN-bd"/>
</dbReference>
<dbReference type="NCBIfam" id="TIGR00558">
    <property type="entry name" value="pdxH"/>
    <property type="match status" value="1"/>
</dbReference>
<dbReference type="NCBIfam" id="NF004231">
    <property type="entry name" value="PRK05679.1"/>
    <property type="match status" value="1"/>
</dbReference>
<dbReference type="PANTHER" id="PTHR10851:SF0">
    <property type="entry name" value="PYRIDOXINE-5'-PHOSPHATE OXIDASE"/>
    <property type="match status" value="1"/>
</dbReference>
<dbReference type="PANTHER" id="PTHR10851">
    <property type="entry name" value="PYRIDOXINE-5-PHOSPHATE OXIDASE"/>
    <property type="match status" value="1"/>
</dbReference>
<dbReference type="Pfam" id="PF10590">
    <property type="entry name" value="PNP_phzG_C"/>
    <property type="match status" value="1"/>
</dbReference>
<dbReference type="Pfam" id="PF01243">
    <property type="entry name" value="PNPOx_N"/>
    <property type="match status" value="1"/>
</dbReference>
<dbReference type="PIRSF" id="PIRSF000190">
    <property type="entry name" value="Pyd_amn-ph_oxd"/>
    <property type="match status" value="1"/>
</dbReference>
<dbReference type="SUPFAM" id="SSF50475">
    <property type="entry name" value="FMN-binding split barrel"/>
    <property type="match status" value="1"/>
</dbReference>
<dbReference type="PROSITE" id="PS01064">
    <property type="entry name" value="PYRIDOX_OXIDASE"/>
    <property type="match status" value="1"/>
</dbReference>
<comment type="function">
    <text evidence="1">Catalyzes the oxidation of either pyridoxine 5'-phosphate (PNP) or pyridoxamine 5'-phosphate (PMP) into pyridoxal 5'-phosphate (PLP).</text>
</comment>
<comment type="catalytic activity">
    <reaction evidence="1">
        <text>pyridoxamine 5'-phosphate + O2 + H2O = pyridoxal 5'-phosphate + H2O2 + NH4(+)</text>
        <dbReference type="Rhea" id="RHEA:15817"/>
        <dbReference type="ChEBI" id="CHEBI:15377"/>
        <dbReference type="ChEBI" id="CHEBI:15379"/>
        <dbReference type="ChEBI" id="CHEBI:16240"/>
        <dbReference type="ChEBI" id="CHEBI:28938"/>
        <dbReference type="ChEBI" id="CHEBI:58451"/>
        <dbReference type="ChEBI" id="CHEBI:597326"/>
        <dbReference type="EC" id="1.4.3.5"/>
    </reaction>
</comment>
<comment type="catalytic activity">
    <reaction evidence="1">
        <text>pyridoxine 5'-phosphate + O2 = pyridoxal 5'-phosphate + H2O2</text>
        <dbReference type="Rhea" id="RHEA:15149"/>
        <dbReference type="ChEBI" id="CHEBI:15379"/>
        <dbReference type="ChEBI" id="CHEBI:16240"/>
        <dbReference type="ChEBI" id="CHEBI:58589"/>
        <dbReference type="ChEBI" id="CHEBI:597326"/>
        <dbReference type="EC" id="1.4.3.5"/>
    </reaction>
</comment>
<comment type="cofactor">
    <cofactor evidence="1">
        <name>FMN</name>
        <dbReference type="ChEBI" id="CHEBI:58210"/>
    </cofactor>
    <text evidence="1">Binds 1 FMN per subunit.</text>
</comment>
<comment type="pathway">
    <text evidence="1">Cofactor metabolism; pyridoxal 5'-phosphate salvage; pyridoxal 5'-phosphate from pyridoxamine 5'-phosphate: step 1/1.</text>
</comment>
<comment type="pathway">
    <text evidence="1">Cofactor metabolism; pyridoxal 5'-phosphate salvage; pyridoxal 5'-phosphate from pyridoxine 5'-phosphate: step 1/1.</text>
</comment>
<comment type="subunit">
    <text evidence="1">Homodimer.</text>
</comment>
<comment type="similarity">
    <text evidence="1">Belongs to the pyridoxamine 5'-phosphate oxidase family.</text>
</comment>
<comment type="sequence caution" evidence="2">
    <conflict type="erroneous initiation">
        <sequence resource="EMBL-CDS" id="AAC22522"/>
    </conflict>
</comment>
<name>PDXH_HAEIN</name>
<gene>
    <name evidence="1" type="primary">pdxH</name>
    <name type="ordered locus">HI_0863</name>
</gene>